<comment type="function">
    <text evidence="1">Converts heme B (protoheme IX) to heme O by substitution of the vinyl group on carbon 2 of heme B porphyrin ring with a hydroxyethyl farnesyl side group.</text>
</comment>
<comment type="catalytic activity">
    <reaction evidence="1">
        <text>heme b + (2E,6E)-farnesyl diphosphate + H2O = Fe(II)-heme o + diphosphate</text>
        <dbReference type="Rhea" id="RHEA:28070"/>
        <dbReference type="ChEBI" id="CHEBI:15377"/>
        <dbReference type="ChEBI" id="CHEBI:33019"/>
        <dbReference type="ChEBI" id="CHEBI:60344"/>
        <dbReference type="ChEBI" id="CHEBI:60530"/>
        <dbReference type="ChEBI" id="CHEBI:175763"/>
        <dbReference type="EC" id="2.5.1.141"/>
    </reaction>
</comment>
<comment type="pathway">
    <text evidence="1">Porphyrin-containing compound metabolism; heme O biosynthesis; heme O from protoheme: step 1/1.</text>
</comment>
<comment type="subcellular location">
    <subcellularLocation>
        <location evidence="1">Cell membrane</location>
        <topology evidence="1">Multi-pass membrane protein</topology>
    </subcellularLocation>
</comment>
<comment type="miscellaneous">
    <text evidence="1">Carbon 2 of the heme B porphyrin ring is defined according to the Fischer nomenclature.</text>
</comment>
<comment type="similarity">
    <text evidence="1">Belongs to the UbiA prenyltransferase family. Protoheme IX farnesyltransferase subfamily.</text>
</comment>
<proteinExistence type="inferred from homology"/>
<evidence type="ECO:0000255" key="1">
    <source>
        <dbReference type="HAMAP-Rule" id="MF_00154"/>
    </source>
</evidence>
<keyword id="KW-1003">Cell membrane</keyword>
<keyword id="KW-0350">Heme biosynthesis</keyword>
<keyword id="KW-0472">Membrane</keyword>
<keyword id="KW-1185">Reference proteome</keyword>
<keyword id="KW-0808">Transferase</keyword>
<keyword id="KW-0812">Transmembrane</keyword>
<keyword id="KW-1133">Transmembrane helix</keyword>
<reference key="1">
    <citation type="journal article" date="2008" name="J. Bacteriol.">
        <title>Genome sequence of the fish pathogen Renibacterium salmoninarum suggests reductive evolution away from an environmental Arthrobacter ancestor.</title>
        <authorList>
            <person name="Wiens G.D."/>
            <person name="Rockey D.D."/>
            <person name="Wu Z."/>
            <person name="Chang J."/>
            <person name="Levy R."/>
            <person name="Crane S."/>
            <person name="Chen D.S."/>
            <person name="Capri G.R."/>
            <person name="Burnett J.R."/>
            <person name="Sudheesh P.S."/>
            <person name="Schipma M.J."/>
            <person name="Burd H."/>
            <person name="Bhattacharyya A."/>
            <person name="Rhodes L.D."/>
            <person name="Kaul R."/>
            <person name="Strom M.S."/>
        </authorList>
    </citation>
    <scope>NUCLEOTIDE SEQUENCE [LARGE SCALE GENOMIC DNA]</scope>
    <source>
        <strain>ATCC 33209 / DSM 20767 / JCM 11484 / NBRC 15589 / NCIMB 2235</strain>
    </source>
</reference>
<name>COXX_RENSM</name>
<feature type="chain" id="PRO_0000346066" description="Protoheme IX farnesyltransferase">
    <location>
        <begin position="1"/>
        <end position="318"/>
    </location>
</feature>
<feature type="transmembrane region" description="Helical" evidence="1">
    <location>
        <begin position="37"/>
        <end position="57"/>
    </location>
</feature>
<feature type="transmembrane region" description="Helical" evidence="1">
    <location>
        <begin position="59"/>
        <end position="79"/>
    </location>
</feature>
<feature type="transmembrane region" description="Helical" evidence="1">
    <location>
        <begin position="108"/>
        <end position="128"/>
    </location>
</feature>
<feature type="transmembrane region" description="Helical" evidence="1">
    <location>
        <begin position="131"/>
        <end position="151"/>
    </location>
</feature>
<feature type="transmembrane region" description="Helical" evidence="1">
    <location>
        <begin position="158"/>
        <end position="178"/>
    </location>
</feature>
<feature type="transmembrane region" description="Helical" evidence="1">
    <location>
        <begin position="183"/>
        <end position="203"/>
    </location>
</feature>
<feature type="transmembrane region" description="Helical" evidence="1">
    <location>
        <begin position="216"/>
        <end position="238"/>
    </location>
</feature>
<feature type="transmembrane region" description="Helical" evidence="1">
    <location>
        <begin position="249"/>
        <end position="269"/>
    </location>
</feature>
<feature type="transmembrane region" description="Helical" evidence="1">
    <location>
        <begin position="296"/>
        <end position="316"/>
    </location>
</feature>
<sequence length="318" mass="34437">MRLTQAPATTAAAGNPPHKLGFAAKTKAYIALTKPRVMELLLVTTLPTMIFAARGLPNIWLILATMIGGAFAAGSAGAFNCYIDRDIDKIMHRTEDRPLVTGAVTPREALVFSWALGILSIAILWFGANPLAGLLGIAAIFFYVVVYTLILKRRTAQNIVWGGVAGCMPVLIAWAAVTNKVEWPAIILFMVIFLWTPPHYWPLSMRYSEDYKAANVPMLGAVAGARIVSVQVVLYTWAMVVCSLLLIPLGHACIVYTVVAGAAGLWFLLEAHRLHSKASHDTVTNKSAMKVFHGSISYLTLLFVALAVDPFVGMPLMG</sequence>
<organism>
    <name type="scientific">Renibacterium salmoninarum (strain ATCC 33209 / DSM 20767 / JCM 11484 / NBRC 15589 / NCIMB 2235)</name>
    <dbReference type="NCBI Taxonomy" id="288705"/>
    <lineage>
        <taxon>Bacteria</taxon>
        <taxon>Bacillati</taxon>
        <taxon>Actinomycetota</taxon>
        <taxon>Actinomycetes</taxon>
        <taxon>Micrococcales</taxon>
        <taxon>Micrococcaceae</taxon>
        <taxon>Renibacterium</taxon>
    </lineage>
</organism>
<accession>A9WT38</accession>
<gene>
    <name evidence="1" type="primary">ctaB</name>
    <name type="ordered locus">RSal33209_2245</name>
</gene>
<protein>
    <recommendedName>
        <fullName evidence="1">Protoheme IX farnesyltransferase</fullName>
        <ecNumber evidence="1">2.5.1.141</ecNumber>
    </recommendedName>
    <alternativeName>
        <fullName evidence="1">Heme B farnesyltransferase</fullName>
    </alternativeName>
    <alternativeName>
        <fullName evidence="1">Heme O synthase</fullName>
    </alternativeName>
</protein>
<dbReference type="EC" id="2.5.1.141" evidence="1"/>
<dbReference type="EMBL" id="CP000910">
    <property type="protein sequence ID" value="ABY23976.1"/>
    <property type="molecule type" value="Genomic_DNA"/>
</dbReference>
<dbReference type="RefSeq" id="WP_012245641.1">
    <property type="nucleotide sequence ID" value="NC_010168.1"/>
</dbReference>
<dbReference type="SMR" id="A9WT38"/>
<dbReference type="STRING" id="288705.RSal33209_2245"/>
<dbReference type="KEGG" id="rsa:RSal33209_2245"/>
<dbReference type="eggNOG" id="COG0109">
    <property type="taxonomic scope" value="Bacteria"/>
</dbReference>
<dbReference type="HOGENOM" id="CLU_029631_0_1_11"/>
<dbReference type="UniPathway" id="UPA00834">
    <property type="reaction ID" value="UER00712"/>
</dbReference>
<dbReference type="Proteomes" id="UP000002007">
    <property type="component" value="Chromosome"/>
</dbReference>
<dbReference type="GO" id="GO:0005886">
    <property type="term" value="C:plasma membrane"/>
    <property type="evidence" value="ECO:0007669"/>
    <property type="project" value="UniProtKB-SubCell"/>
</dbReference>
<dbReference type="GO" id="GO:0008495">
    <property type="term" value="F:protoheme IX farnesyltransferase activity"/>
    <property type="evidence" value="ECO:0007669"/>
    <property type="project" value="UniProtKB-UniRule"/>
</dbReference>
<dbReference type="GO" id="GO:0048034">
    <property type="term" value="P:heme O biosynthetic process"/>
    <property type="evidence" value="ECO:0007669"/>
    <property type="project" value="UniProtKB-UniRule"/>
</dbReference>
<dbReference type="CDD" id="cd13957">
    <property type="entry name" value="PT_UbiA_Cox10"/>
    <property type="match status" value="1"/>
</dbReference>
<dbReference type="FunFam" id="1.10.357.140:FF:000001">
    <property type="entry name" value="Protoheme IX farnesyltransferase"/>
    <property type="match status" value="1"/>
</dbReference>
<dbReference type="Gene3D" id="1.10.357.140">
    <property type="entry name" value="UbiA prenyltransferase"/>
    <property type="match status" value="1"/>
</dbReference>
<dbReference type="HAMAP" id="MF_00154">
    <property type="entry name" value="CyoE_CtaB"/>
    <property type="match status" value="1"/>
</dbReference>
<dbReference type="InterPro" id="IPR006369">
    <property type="entry name" value="Protohaem_IX_farnesylTrfase"/>
</dbReference>
<dbReference type="InterPro" id="IPR000537">
    <property type="entry name" value="UbiA_prenyltransferase"/>
</dbReference>
<dbReference type="InterPro" id="IPR030470">
    <property type="entry name" value="UbiA_prenylTrfase_CS"/>
</dbReference>
<dbReference type="InterPro" id="IPR044878">
    <property type="entry name" value="UbiA_sf"/>
</dbReference>
<dbReference type="NCBIfam" id="TIGR01473">
    <property type="entry name" value="cyoE_ctaB"/>
    <property type="match status" value="1"/>
</dbReference>
<dbReference type="NCBIfam" id="NF003349">
    <property type="entry name" value="PRK04375.1-2"/>
    <property type="match status" value="1"/>
</dbReference>
<dbReference type="PANTHER" id="PTHR43448:SF7">
    <property type="entry name" value="4-HYDROXYBENZOATE SOLANESYLTRANSFERASE"/>
    <property type="match status" value="1"/>
</dbReference>
<dbReference type="PANTHER" id="PTHR43448">
    <property type="entry name" value="PROTOHEME IX FARNESYLTRANSFERASE, MITOCHONDRIAL"/>
    <property type="match status" value="1"/>
</dbReference>
<dbReference type="Pfam" id="PF01040">
    <property type="entry name" value="UbiA"/>
    <property type="match status" value="1"/>
</dbReference>
<dbReference type="PROSITE" id="PS00943">
    <property type="entry name" value="UBIA"/>
    <property type="match status" value="1"/>
</dbReference>